<proteinExistence type="evidence at protein level"/>
<sequence length="334" mass="36553">MDAFDAIPDPVVIDILNRVGDVKTLIRCRSVSKRFNSLATQSESLLLQLDQILGATESDSEIDSPIASFFRSLFKSIHGLLPPIFSKPANSDEILTRSPKTPAQILSGFERIRNLEVELYGGDVKLEKGAAVKWKAEFGKTLKSCVIVAFRSATVNTSAATEAAAVVDGVVESDSEFVCGLKTRVVWTISALMAASTRHYLMRDLVKDHKEMEKLIVRDSDGEGTVVMDAAGMKEYRETEVRGDNKESERVGERTVVPSVRMSMRHAPSLMLKSGICLEAATLVVVRPTGVASDDNDVELVTEAFAGDGDDCMYGEAVTALLKRRRNVLEMNSF</sequence>
<organism>
    <name type="scientific">Arabidopsis thaliana</name>
    <name type="common">Mouse-ear cress</name>
    <dbReference type="NCBI Taxonomy" id="3702"/>
    <lineage>
        <taxon>Eukaryota</taxon>
        <taxon>Viridiplantae</taxon>
        <taxon>Streptophyta</taxon>
        <taxon>Embryophyta</taxon>
        <taxon>Tracheophyta</taxon>
        <taxon>Spermatophyta</taxon>
        <taxon>Magnoliopsida</taxon>
        <taxon>eudicotyledons</taxon>
        <taxon>Gunneridae</taxon>
        <taxon>Pentapetalae</taxon>
        <taxon>rosids</taxon>
        <taxon>malvids</taxon>
        <taxon>Brassicales</taxon>
        <taxon>Brassicaceae</taxon>
        <taxon>Camelineae</taxon>
        <taxon>Arabidopsis</taxon>
    </lineage>
</organism>
<reference key="1">
    <citation type="journal article" date="2000" name="Nature">
        <title>Sequence and analysis of chromosome 1 of the plant Arabidopsis thaliana.</title>
        <authorList>
            <person name="Theologis A."/>
            <person name="Ecker J.R."/>
            <person name="Palm C.J."/>
            <person name="Federspiel N.A."/>
            <person name="Kaul S."/>
            <person name="White O."/>
            <person name="Alonso J."/>
            <person name="Altafi H."/>
            <person name="Araujo R."/>
            <person name="Bowman C.L."/>
            <person name="Brooks S.Y."/>
            <person name="Buehler E."/>
            <person name="Chan A."/>
            <person name="Chao Q."/>
            <person name="Chen H."/>
            <person name="Cheuk R.F."/>
            <person name="Chin C.W."/>
            <person name="Chung M.K."/>
            <person name="Conn L."/>
            <person name="Conway A.B."/>
            <person name="Conway A.R."/>
            <person name="Creasy T.H."/>
            <person name="Dewar K."/>
            <person name="Dunn P."/>
            <person name="Etgu P."/>
            <person name="Feldblyum T.V."/>
            <person name="Feng J.-D."/>
            <person name="Fong B."/>
            <person name="Fujii C.Y."/>
            <person name="Gill J.E."/>
            <person name="Goldsmith A.D."/>
            <person name="Haas B."/>
            <person name="Hansen N.F."/>
            <person name="Hughes B."/>
            <person name="Huizar L."/>
            <person name="Hunter J.L."/>
            <person name="Jenkins J."/>
            <person name="Johnson-Hopson C."/>
            <person name="Khan S."/>
            <person name="Khaykin E."/>
            <person name="Kim C.J."/>
            <person name="Koo H.L."/>
            <person name="Kremenetskaia I."/>
            <person name="Kurtz D.B."/>
            <person name="Kwan A."/>
            <person name="Lam B."/>
            <person name="Langin-Hooper S."/>
            <person name="Lee A."/>
            <person name="Lee J.M."/>
            <person name="Lenz C.A."/>
            <person name="Li J.H."/>
            <person name="Li Y.-P."/>
            <person name="Lin X."/>
            <person name="Liu S.X."/>
            <person name="Liu Z.A."/>
            <person name="Luros J.S."/>
            <person name="Maiti R."/>
            <person name="Marziali A."/>
            <person name="Militscher J."/>
            <person name="Miranda M."/>
            <person name="Nguyen M."/>
            <person name="Nierman W.C."/>
            <person name="Osborne B.I."/>
            <person name="Pai G."/>
            <person name="Peterson J."/>
            <person name="Pham P.K."/>
            <person name="Rizzo M."/>
            <person name="Rooney T."/>
            <person name="Rowley D."/>
            <person name="Sakano H."/>
            <person name="Salzberg S.L."/>
            <person name="Schwartz J.R."/>
            <person name="Shinn P."/>
            <person name="Southwick A.M."/>
            <person name="Sun H."/>
            <person name="Tallon L.J."/>
            <person name="Tambunga G."/>
            <person name="Toriumi M.J."/>
            <person name="Town C.D."/>
            <person name="Utterback T."/>
            <person name="Van Aken S."/>
            <person name="Vaysberg M."/>
            <person name="Vysotskaia V.S."/>
            <person name="Walker M."/>
            <person name="Wu D."/>
            <person name="Yu G."/>
            <person name="Fraser C.M."/>
            <person name="Venter J.C."/>
            <person name="Davis R.W."/>
        </authorList>
    </citation>
    <scope>NUCLEOTIDE SEQUENCE [LARGE SCALE GENOMIC DNA]</scope>
    <source>
        <strain>cv. Columbia</strain>
    </source>
</reference>
<reference key="2">
    <citation type="journal article" date="2017" name="Plant J.">
        <title>Araport11: a complete reannotation of the Arabidopsis thaliana reference genome.</title>
        <authorList>
            <person name="Cheng C.Y."/>
            <person name="Krishnakumar V."/>
            <person name="Chan A.P."/>
            <person name="Thibaud-Nissen F."/>
            <person name="Schobel S."/>
            <person name="Town C.D."/>
        </authorList>
    </citation>
    <scope>GENOME REANNOTATION</scope>
    <source>
        <strain>cv. Columbia</strain>
    </source>
</reference>
<reference key="3">
    <citation type="journal article" date="2003" name="Science">
        <title>Empirical analysis of transcriptional activity in the Arabidopsis genome.</title>
        <authorList>
            <person name="Yamada K."/>
            <person name="Lim J."/>
            <person name="Dale J.M."/>
            <person name="Chen H."/>
            <person name="Shinn P."/>
            <person name="Palm C.J."/>
            <person name="Southwick A.M."/>
            <person name="Wu H.C."/>
            <person name="Kim C.J."/>
            <person name="Nguyen M."/>
            <person name="Pham P.K."/>
            <person name="Cheuk R.F."/>
            <person name="Karlin-Newmann G."/>
            <person name="Liu S.X."/>
            <person name="Lam B."/>
            <person name="Sakano H."/>
            <person name="Wu T."/>
            <person name="Yu G."/>
            <person name="Miranda M."/>
            <person name="Quach H.L."/>
            <person name="Tripp M."/>
            <person name="Chang C.H."/>
            <person name="Lee J.M."/>
            <person name="Toriumi M.J."/>
            <person name="Chan M.M."/>
            <person name="Tang C.C."/>
            <person name="Onodera C.S."/>
            <person name="Deng J.M."/>
            <person name="Akiyama K."/>
            <person name="Ansari Y."/>
            <person name="Arakawa T."/>
            <person name="Banh J."/>
            <person name="Banno F."/>
            <person name="Bowser L."/>
            <person name="Brooks S.Y."/>
            <person name="Carninci P."/>
            <person name="Chao Q."/>
            <person name="Choy N."/>
            <person name="Enju A."/>
            <person name="Goldsmith A.D."/>
            <person name="Gurjal M."/>
            <person name="Hansen N.F."/>
            <person name="Hayashizaki Y."/>
            <person name="Johnson-Hopson C."/>
            <person name="Hsuan V.W."/>
            <person name="Iida K."/>
            <person name="Karnes M."/>
            <person name="Khan S."/>
            <person name="Koesema E."/>
            <person name="Ishida J."/>
            <person name="Jiang P.X."/>
            <person name="Jones T."/>
            <person name="Kawai J."/>
            <person name="Kamiya A."/>
            <person name="Meyers C."/>
            <person name="Nakajima M."/>
            <person name="Narusaka M."/>
            <person name="Seki M."/>
            <person name="Sakurai T."/>
            <person name="Satou M."/>
            <person name="Tamse R."/>
            <person name="Vaysberg M."/>
            <person name="Wallender E.K."/>
            <person name="Wong C."/>
            <person name="Yamamura Y."/>
            <person name="Yuan S."/>
            <person name="Shinozaki K."/>
            <person name="Davis R.W."/>
            <person name="Theologis A."/>
            <person name="Ecker J.R."/>
        </authorList>
    </citation>
    <scope>NUCLEOTIDE SEQUENCE [LARGE SCALE MRNA]</scope>
    <source>
        <strain>cv. Columbia</strain>
    </source>
</reference>
<reference key="4">
    <citation type="journal article" date="2002" name="Proc. Natl. Acad. Sci. U.S.A.">
        <title>The F-box subunit of the SCF E3 complex is encoded by a diverse superfamily of genes in Arabidopsis.</title>
        <authorList>
            <person name="Gagne J.M."/>
            <person name="Downes B.P."/>
            <person name="Shiu S.-H."/>
            <person name="Durski A.M."/>
            <person name="Vierstra R.D."/>
        </authorList>
    </citation>
    <scope>INTERACTION WITH SKP1A/ASK1; SKP1B/ASK2; ASK11 AND ASK13</scope>
</reference>
<reference key="5">
    <citation type="journal article" date="2011" name="Plant Physiol.">
        <title>AUXIN UP-REGULATED F-BOX PROTEIN1 regulates the cross talk between auxin transport and cytokinin signaling during plant root growth.</title>
        <authorList>
            <person name="Zheng X."/>
            <person name="Miller N.D."/>
            <person name="Lewis D.R."/>
            <person name="Christians M.J."/>
            <person name="Lee K.H."/>
            <person name="Muday G.K."/>
            <person name="Spalding E.P."/>
            <person name="Vierstra R.D."/>
        </authorList>
    </citation>
    <scope>FUNCTION</scope>
    <scope>INDUCTION BY AUXIN</scope>
</reference>
<protein>
    <recommendedName>
        <fullName evidence="6">F-box protein AUF1</fullName>
    </recommendedName>
    <alternativeName>
        <fullName evidence="6">F-box protein At1g78100</fullName>
    </alternativeName>
    <alternativeName>
        <fullName evidence="5">Protein AUXIN UP-REGULATED F-BOX PROTEIN 1</fullName>
    </alternativeName>
</protein>
<gene>
    <name evidence="5" type="primary">AUF1</name>
    <name evidence="7" type="ordered locus">At1g78100</name>
    <name evidence="8" type="ORF">T11I11.4</name>
</gene>
<feature type="chain" id="PRO_0000283364" description="F-box protein AUF1">
    <location>
        <begin position="1"/>
        <end position="334"/>
    </location>
</feature>
<feature type="domain" description="F-box">
    <location>
        <begin position="1"/>
        <end position="49"/>
    </location>
</feature>
<accession>Q9C9S2</accession>
<dbReference type="EMBL" id="AC012680">
    <property type="protein sequence ID" value="AAG52096.1"/>
    <property type="molecule type" value="Genomic_DNA"/>
</dbReference>
<dbReference type="EMBL" id="CP002684">
    <property type="protein sequence ID" value="AEE36067.1"/>
    <property type="molecule type" value="Genomic_DNA"/>
</dbReference>
<dbReference type="EMBL" id="AY054568">
    <property type="protein sequence ID" value="AAK96759.1"/>
    <property type="molecule type" value="mRNA"/>
</dbReference>
<dbReference type="EMBL" id="AY081694">
    <property type="protein sequence ID" value="AAM10256.1"/>
    <property type="molecule type" value="mRNA"/>
</dbReference>
<dbReference type="PIR" id="B96810">
    <property type="entry name" value="B96810"/>
</dbReference>
<dbReference type="RefSeq" id="NP_565169.1">
    <property type="nucleotide sequence ID" value="NM_106460.3"/>
</dbReference>
<dbReference type="BioGRID" id="29365">
    <property type="interactions" value="11"/>
</dbReference>
<dbReference type="FunCoup" id="Q9C9S2">
    <property type="interactions" value="14"/>
</dbReference>
<dbReference type="IntAct" id="Q9C9S2">
    <property type="interactions" value="7"/>
</dbReference>
<dbReference type="STRING" id="3702.Q9C9S2"/>
<dbReference type="PaxDb" id="3702-AT1G78100.1"/>
<dbReference type="EnsemblPlants" id="AT1G78100.1">
    <property type="protein sequence ID" value="AT1G78100.1"/>
    <property type="gene ID" value="AT1G78100"/>
</dbReference>
<dbReference type="GeneID" id="844146"/>
<dbReference type="Gramene" id="AT1G78100.1">
    <property type="protein sequence ID" value="AT1G78100.1"/>
    <property type="gene ID" value="AT1G78100"/>
</dbReference>
<dbReference type="KEGG" id="ath:AT1G78100"/>
<dbReference type="Araport" id="AT1G78100"/>
<dbReference type="TAIR" id="AT1G78100">
    <property type="gene designation" value="AUF1"/>
</dbReference>
<dbReference type="eggNOG" id="ENOG502QV7H">
    <property type="taxonomic scope" value="Eukaryota"/>
</dbReference>
<dbReference type="HOGENOM" id="CLU_049279_2_0_1"/>
<dbReference type="InParanoid" id="Q9C9S2"/>
<dbReference type="OMA" id="TRHYLMR"/>
<dbReference type="OrthoDB" id="1693699at2759"/>
<dbReference type="PhylomeDB" id="Q9C9S2"/>
<dbReference type="UniPathway" id="UPA00143"/>
<dbReference type="PRO" id="PR:Q9C9S2"/>
<dbReference type="Proteomes" id="UP000006548">
    <property type="component" value="Chromosome 1"/>
</dbReference>
<dbReference type="ExpressionAtlas" id="Q9C9S2">
    <property type="expression patterns" value="baseline and differential"/>
</dbReference>
<dbReference type="GO" id="GO:0005634">
    <property type="term" value="C:nucleus"/>
    <property type="evidence" value="ECO:0007669"/>
    <property type="project" value="UniProtKB-SubCell"/>
</dbReference>
<dbReference type="GO" id="GO:0010541">
    <property type="term" value="P:acropetal auxin transport"/>
    <property type="evidence" value="ECO:0000315"/>
    <property type="project" value="TAIR"/>
</dbReference>
<dbReference type="GO" id="GO:0010540">
    <property type="term" value="P:basipetal auxin transport"/>
    <property type="evidence" value="ECO:0000315"/>
    <property type="project" value="TAIR"/>
</dbReference>
<dbReference type="GO" id="GO:0009736">
    <property type="term" value="P:cytokinin-activated signaling pathway"/>
    <property type="evidence" value="ECO:0000315"/>
    <property type="project" value="TAIR"/>
</dbReference>
<dbReference type="GO" id="GO:0016567">
    <property type="term" value="P:protein ubiquitination"/>
    <property type="evidence" value="ECO:0007669"/>
    <property type="project" value="UniProtKB-UniPathway"/>
</dbReference>
<dbReference type="Gene3D" id="1.20.1280.50">
    <property type="match status" value="1"/>
</dbReference>
<dbReference type="InterPro" id="IPR044809">
    <property type="entry name" value="AUF1-like"/>
</dbReference>
<dbReference type="InterPro" id="IPR036047">
    <property type="entry name" value="F-box-like_dom_sf"/>
</dbReference>
<dbReference type="InterPro" id="IPR001810">
    <property type="entry name" value="F-box_dom"/>
</dbReference>
<dbReference type="PANTHER" id="PTHR31215">
    <property type="entry name" value="OS05G0510400 PROTEIN-RELATED"/>
    <property type="match status" value="1"/>
</dbReference>
<dbReference type="Pfam" id="PF12937">
    <property type="entry name" value="F-box-like"/>
    <property type="match status" value="1"/>
</dbReference>
<dbReference type="SUPFAM" id="SSF81383">
    <property type="entry name" value="F-box domain"/>
    <property type="match status" value="1"/>
</dbReference>
<keyword id="KW-0539">Nucleus</keyword>
<keyword id="KW-1185">Reference proteome</keyword>
<keyword id="KW-0833">Ubl conjugation pathway</keyword>
<name>AUF1_ARATH</name>
<comment type="function">
    <text evidence="2 4">Component of SCF(ASK-cullin-F-box) E3 ubiquitin ligase complexes, which may mediate the ubiquitination and subsequent proteasomal degradation of target proteins (By similarity). Involved in the control of basipetal and acropetal auxin transport by promoting the distribution and expression of the auxin transporter PIN2 (PubMed:21653785). Promotes cytokinin-mediated cell expansion in the root elongation and differentiation zone, without affecting root cell division (PubMed:21653785).</text>
</comment>
<comment type="pathway">
    <text evidence="6">Protein modification; protein ubiquitination.</text>
</comment>
<comment type="subunit">
    <text evidence="1 3">Part of a SCF (ASK-cullin-F-box) protein ligase complex (By similarity). Interacts with SKP1A/ASK1, SKP1B/ASK2, ASK11 and ASK13 (PubMed:12169662).</text>
</comment>
<comment type="subcellular location">
    <subcellularLocation>
        <location evidence="1">Nucleus</location>
    </subcellularLocation>
</comment>
<comment type="induction">
    <text evidence="4">Induced by auxin.</text>
</comment>
<comment type="domain">
    <text evidence="1">The F-box is necessary for the interaction with ASK proteins.</text>
</comment>
<evidence type="ECO:0000250" key="1">
    <source>
        <dbReference type="UniProtKB" id="Q8LEA8"/>
    </source>
</evidence>
<evidence type="ECO:0000250" key="2">
    <source>
        <dbReference type="UniProtKB" id="Q9SRV0"/>
    </source>
</evidence>
<evidence type="ECO:0000269" key="3">
    <source>
    </source>
</evidence>
<evidence type="ECO:0000269" key="4">
    <source>
    </source>
</evidence>
<evidence type="ECO:0000303" key="5">
    <source>
    </source>
</evidence>
<evidence type="ECO:0000305" key="6"/>
<evidence type="ECO:0000312" key="7">
    <source>
        <dbReference type="Araport" id="AT1G78100"/>
    </source>
</evidence>
<evidence type="ECO:0000312" key="8">
    <source>
        <dbReference type="EMBL" id="AAG52096.1"/>
    </source>
</evidence>